<reference key="1">
    <citation type="journal article" date="2011" name="J. Bacteriol.">
        <title>Complete genome sequence and updated annotation of Desulfovibrio alaskensis G20.</title>
        <authorList>
            <person name="Hauser L.J."/>
            <person name="Land M.L."/>
            <person name="Brown S.D."/>
            <person name="Larimer F."/>
            <person name="Keller K.L."/>
            <person name="Rapp-Giles B.J."/>
            <person name="Price M.N."/>
            <person name="Lin M."/>
            <person name="Bruce D.C."/>
            <person name="Detter J.C."/>
            <person name="Tapia R."/>
            <person name="Han C.S."/>
            <person name="Goodwin L.A."/>
            <person name="Cheng J.F."/>
            <person name="Pitluck S."/>
            <person name="Copeland A."/>
            <person name="Lucas S."/>
            <person name="Nolan M."/>
            <person name="Lapidus A.L."/>
            <person name="Palumbo A.V."/>
            <person name="Wall J.D."/>
        </authorList>
    </citation>
    <scope>NUCLEOTIDE SEQUENCE [LARGE SCALE GENOMIC DNA]</scope>
    <source>
        <strain>ATCC BAA-1058 / DSM 17464 / G20</strain>
    </source>
</reference>
<keyword id="KW-0456">Lyase</keyword>
<keyword id="KW-0460">Magnesium</keyword>
<keyword id="KW-0464">Manganese</keyword>
<keyword id="KW-0479">Metal-binding</keyword>
<keyword id="KW-1185">Reference proteome</keyword>
<keyword id="KW-0686">Riboflavin biosynthesis</keyword>
<dbReference type="EC" id="4.1.99.12" evidence="1"/>
<dbReference type="EMBL" id="CP000112">
    <property type="protein sequence ID" value="ABB37851.1"/>
    <property type="molecule type" value="Genomic_DNA"/>
</dbReference>
<dbReference type="RefSeq" id="WP_011367087.1">
    <property type="nucleotide sequence ID" value="NC_007519.1"/>
</dbReference>
<dbReference type="SMR" id="Q313P5"/>
<dbReference type="STRING" id="207559.Dde_1050"/>
<dbReference type="KEGG" id="dde:Dde_1050"/>
<dbReference type="eggNOG" id="COG0108">
    <property type="taxonomic scope" value="Bacteria"/>
</dbReference>
<dbReference type="HOGENOM" id="CLU_020273_3_0_7"/>
<dbReference type="UniPathway" id="UPA00275">
    <property type="reaction ID" value="UER00399"/>
</dbReference>
<dbReference type="Proteomes" id="UP000002710">
    <property type="component" value="Chromosome"/>
</dbReference>
<dbReference type="GO" id="GO:0005829">
    <property type="term" value="C:cytosol"/>
    <property type="evidence" value="ECO:0007669"/>
    <property type="project" value="TreeGrafter"/>
</dbReference>
<dbReference type="GO" id="GO:0008686">
    <property type="term" value="F:3,4-dihydroxy-2-butanone-4-phosphate synthase activity"/>
    <property type="evidence" value="ECO:0007669"/>
    <property type="project" value="UniProtKB-UniRule"/>
</dbReference>
<dbReference type="GO" id="GO:0000287">
    <property type="term" value="F:magnesium ion binding"/>
    <property type="evidence" value="ECO:0007669"/>
    <property type="project" value="UniProtKB-UniRule"/>
</dbReference>
<dbReference type="GO" id="GO:0030145">
    <property type="term" value="F:manganese ion binding"/>
    <property type="evidence" value="ECO:0007669"/>
    <property type="project" value="UniProtKB-UniRule"/>
</dbReference>
<dbReference type="GO" id="GO:0009231">
    <property type="term" value="P:riboflavin biosynthetic process"/>
    <property type="evidence" value="ECO:0007669"/>
    <property type="project" value="UniProtKB-UniRule"/>
</dbReference>
<dbReference type="FunFam" id="3.90.870.10:FF:000002">
    <property type="entry name" value="3,4-dihydroxy-2-butanone 4-phosphate synthase"/>
    <property type="match status" value="1"/>
</dbReference>
<dbReference type="Gene3D" id="3.90.870.10">
    <property type="entry name" value="DHBP synthase"/>
    <property type="match status" value="1"/>
</dbReference>
<dbReference type="HAMAP" id="MF_00180">
    <property type="entry name" value="RibB"/>
    <property type="match status" value="1"/>
</dbReference>
<dbReference type="InterPro" id="IPR017945">
    <property type="entry name" value="DHBP_synth_RibB-like_a/b_dom"/>
</dbReference>
<dbReference type="InterPro" id="IPR000422">
    <property type="entry name" value="DHBP_synthase_RibB"/>
</dbReference>
<dbReference type="NCBIfam" id="TIGR00506">
    <property type="entry name" value="ribB"/>
    <property type="match status" value="1"/>
</dbReference>
<dbReference type="PANTHER" id="PTHR21327:SF38">
    <property type="entry name" value="3,4-DIHYDROXY-2-BUTANONE 4-PHOSPHATE SYNTHASE"/>
    <property type="match status" value="1"/>
</dbReference>
<dbReference type="PANTHER" id="PTHR21327">
    <property type="entry name" value="GTP CYCLOHYDROLASE II-RELATED"/>
    <property type="match status" value="1"/>
</dbReference>
<dbReference type="Pfam" id="PF00926">
    <property type="entry name" value="DHBP_synthase"/>
    <property type="match status" value="1"/>
</dbReference>
<dbReference type="SUPFAM" id="SSF55821">
    <property type="entry name" value="YrdC/RibB"/>
    <property type="match status" value="1"/>
</dbReference>
<feature type="chain" id="PRO_1000040601" description="3,4-dihydroxy-2-butanone 4-phosphate synthase">
    <location>
        <begin position="1"/>
        <end position="219"/>
    </location>
</feature>
<feature type="binding site" evidence="1">
    <location>
        <begin position="37"/>
        <end position="38"/>
    </location>
    <ligand>
        <name>D-ribulose 5-phosphate</name>
        <dbReference type="ChEBI" id="CHEBI:58121"/>
    </ligand>
</feature>
<feature type="binding site" evidence="1">
    <location>
        <position position="38"/>
    </location>
    <ligand>
        <name>Mg(2+)</name>
        <dbReference type="ChEBI" id="CHEBI:18420"/>
        <label>1</label>
    </ligand>
</feature>
<feature type="binding site" evidence="1">
    <location>
        <position position="38"/>
    </location>
    <ligand>
        <name>Mg(2+)</name>
        <dbReference type="ChEBI" id="CHEBI:18420"/>
        <label>2</label>
    </ligand>
</feature>
<feature type="binding site" evidence="1">
    <location>
        <position position="42"/>
    </location>
    <ligand>
        <name>D-ribulose 5-phosphate</name>
        <dbReference type="ChEBI" id="CHEBI:58121"/>
    </ligand>
</feature>
<feature type="binding site" evidence="1">
    <location>
        <begin position="150"/>
        <end position="154"/>
    </location>
    <ligand>
        <name>D-ribulose 5-phosphate</name>
        <dbReference type="ChEBI" id="CHEBI:58121"/>
    </ligand>
</feature>
<feature type="binding site" evidence="1">
    <location>
        <position position="153"/>
    </location>
    <ligand>
        <name>Mg(2+)</name>
        <dbReference type="ChEBI" id="CHEBI:18420"/>
        <label>2</label>
    </ligand>
</feature>
<feature type="binding site" evidence="1">
    <location>
        <position position="174"/>
    </location>
    <ligand>
        <name>D-ribulose 5-phosphate</name>
        <dbReference type="ChEBI" id="CHEBI:58121"/>
    </ligand>
</feature>
<feature type="site" description="Essential for catalytic activity" evidence="1">
    <location>
        <position position="136"/>
    </location>
</feature>
<feature type="site" description="Essential for catalytic activity" evidence="1">
    <location>
        <position position="174"/>
    </location>
</feature>
<protein>
    <recommendedName>
        <fullName evidence="1">3,4-dihydroxy-2-butanone 4-phosphate synthase</fullName>
        <shortName evidence="1">DHBP synthase</shortName>
        <ecNumber evidence="1">4.1.99.12</ecNumber>
    </recommendedName>
</protein>
<proteinExistence type="inferred from homology"/>
<name>RIBB_OLEA2</name>
<accession>Q313P5</accession>
<gene>
    <name evidence="1" type="primary">ribB</name>
    <name type="ordered locus">Dde_1050</name>
</gene>
<evidence type="ECO:0000255" key="1">
    <source>
        <dbReference type="HAMAP-Rule" id="MF_00180"/>
    </source>
</evidence>
<comment type="function">
    <text evidence="1">Catalyzes the conversion of D-ribulose 5-phosphate to formate and 3,4-dihydroxy-2-butanone 4-phosphate.</text>
</comment>
<comment type="catalytic activity">
    <reaction evidence="1">
        <text>D-ribulose 5-phosphate = (2S)-2-hydroxy-3-oxobutyl phosphate + formate + H(+)</text>
        <dbReference type="Rhea" id="RHEA:18457"/>
        <dbReference type="ChEBI" id="CHEBI:15378"/>
        <dbReference type="ChEBI" id="CHEBI:15740"/>
        <dbReference type="ChEBI" id="CHEBI:58121"/>
        <dbReference type="ChEBI" id="CHEBI:58830"/>
        <dbReference type="EC" id="4.1.99.12"/>
    </reaction>
</comment>
<comment type="cofactor">
    <cofactor evidence="1">
        <name>Mg(2+)</name>
        <dbReference type="ChEBI" id="CHEBI:18420"/>
    </cofactor>
    <cofactor evidence="1">
        <name>Mn(2+)</name>
        <dbReference type="ChEBI" id="CHEBI:29035"/>
    </cofactor>
    <text evidence="1">Binds 2 divalent metal cations per subunit. Magnesium or manganese.</text>
</comment>
<comment type="pathway">
    <text evidence="1">Cofactor biosynthesis; riboflavin biosynthesis; 2-hydroxy-3-oxobutyl phosphate from D-ribulose 5-phosphate: step 1/1.</text>
</comment>
<comment type="subunit">
    <text evidence="1">Homodimer.</text>
</comment>
<comment type="similarity">
    <text evidence="1">Belongs to the DHBP synthase family.</text>
</comment>
<sequence length="219" mass="23661">MSAKESLLTGTFEERVEAALDALRRGHGVLVTDDEDRENEGDLIFAAETLSDSQMAMLIRECSGIVCLCLTDEKVRALGLPMMVENNSSQYQTAFTVSIEASCGVSTGVSAADRVCTIQAAIADDACPSDLCRPGHVFPLRARPGGVLERRGHTEATVDLMRLAGLKPCGVLCEVTNPDGTMARLPQIVDFGRKHDMVVLTVDDLVRYREMKENKSAAA</sequence>
<organism>
    <name type="scientific">Oleidesulfovibrio alaskensis (strain ATCC BAA-1058 / DSM 17464 / G20)</name>
    <name type="common">Desulfovibrio alaskensis</name>
    <dbReference type="NCBI Taxonomy" id="207559"/>
    <lineage>
        <taxon>Bacteria</taxon>
        <taxon>Pseudomonadati</taxon>
        <taxon>Thermodesulfobacteriota</taxon>
        <taxon>Desulfovibrionia</taxon>
        <taxon>Desulfovibrionales</taxon>
        <taxon>Desulfovibrionaceae</taxon>
        <taxon>Oleidesulfovibrio</taxon>
    </lineage>
</organism>